<keyword id="KW-0444">Lipid biosynthesis</keyword>
<keyword id="KW-0443">Lipid metabolism</keyword>
<keyword id="KW-0548">Nucleotidyltransferase</keyword>
<keyword id="KW-0594">Phospholipid biosynthesis</keyword>
<keyword id="KW-1208">Phospholipid metabolism</keyword>
<keyword id="KW-1185">Reference proteome</keyword>
<keyword id="KW-0808">Transferase</keyword>
<gene>
    <name evidence="4" type="primary">pcyt-1</name>
    <name evidence="4" type="ORF">F08C6.2</name>
</gene>
<reference key="1">
    <citation type="journal article" date="1998" name="Science">
        <title>Genome sequence of the nematode C. elegans: a platform for investigating biology.</title>
        <authorList>
            <consortium name="The C. elegans sequencing consortium"/>
        </authorList>
    </citation>
    <scope>NUCLEOTIDE SEQUENCE [LARGE SCALE GENOMIC DNA]</scope>
    <source>
        <strain>Bristol N2</strain>
    </source>
</reference>
<proteinExistence type="inferred from homology"/>
<protein>
    <recommendedName>
        <fullName>Putative choline-phosphate cytidylyltransferase</fullName>
        <ecNumber>2.7.7.15</ecNumber>
    </recommendedName>
    <alternativeName>
        <fullName>CTP:phosphocholine cytidylyltransferase</fullName>
        <shortName>CCT</shortName>
        <shortName>CT</shortName>
    </alternativeName>
    <alternativeName>
        <fullName>Phosphorylcholine transferase</fullName>
    </alternativeName>
</protein>
<dbReference type="EC" id="2.7.7.15"/>
<dbReference type="EMBL" id="FO080866">
    <property type="protein sequence ID" value="CCD67344.1"/>
    <property type="molecule type" value="Genomic_DNA"/>
</dbReference>
<dbReference type="PIR" id="T15975">
    <property type="entry name" value="T15975"/>
</dbReference>
<dbReference type="SMR" id="P49583"/>
<dbReference type="FunCoup" id="P49583">
    <property type="interactions" value="1789"/>
</dbReference>
<dbReference type="STRING" id="6239.F08C6.2a.1"/>
<dbReference type="iPTMnet" id="P49583"/>
<dbReference type="PaxDb" id="6239-F08C6.2a"/>
<dbReference type="PeptideAtlas" id="P49583"/>
<dbReference type="EnsemblMetazoa" id="F08C6.2a.1">
    <property type="protein sequence ID" value="F08C6.2a.1"/>
    <property type="gene ID" value="WBGene00017241"/>
</dbReference>
<dbReference type="KEGG" id="cel:CELE_F08C6.2"/>
<dbReference type="UCSC" id="F08C6.2a">
    <property type="organism name" value="c. elegans"/>
</dbReference>
<dbReference type="AGR" id="WB:WBGene00017241"/>
<dbReference type="CTD" id="181021"/>
<dbReference type="WormBase" id="F08C6.2a">
    <property type="protein sequence ID" value="CE30937"/>
    <property type="gene ID" value="WBGene00017241"/>
    <property type="gene designation" value="pcyt-1"/>
</dbReference>
<dbReference type="eggNOG" id="KOG2804">
    <property type="taxonomic scope" value="Eukaryota"/>
</dbReference>
<dbReference type="HOGENOM" id="CLU_034585_4_1_1"/>
<dbReference type="InParanoid" id="P49583"/>
<dbReference type="OMA" id="IWRESKG"/>
<dbReference type="OrthoDB" id="17102at2759"/>
<dbReference type="PhylomeDB" id="P49583"/>
<dbReference type="Reactome" id="R-CEL-1483191">
    <property type="pathway name" value="Synthesis of PC"/>
</dbReference>
<dbReference type="UniPathway" id="UPA00753">
    <property type="reaction ID" value="UER00739"/>
</dbReference>
<dbReference type="PRO" id="PR:P49583"/>
<dbReference type="Proteomes" id="UP000001940">
    <property type="component" value="Chromosome X"/>
</dbReference>
<dbReference type="Bgee" id="WBGene00017241">
    <property type="expression patterns" value="Expressed in embryo and 4 other cell types or tissues"/>
</dbReference>
<dbReference type="ExpressionAtlas" id="P49583">
    <property type="expression patterns" value="baseline and differential"/>
</dbReference>
<dbReference type="GO" id="GO:0004105">
    <property type="term" value="F:choline-phosphate cytidylyltransferase activity"/>
    <property type="evidence" value="ECO:0000314"/>
    <property type="project" value="WormBase"/>
</dbReference>
<dbReference type="GO" id="GO:0031210">
    <property type="term" value="F:phosphatidylcholine binding"/>
    <property type="evidence" value="ECO:0000318"/>
    <property type="project" value="GO_Central"/>
</dbReference>
<dbReference type="GO" id="GO:0006656">
    <property type="term" value="P:phosphatidylcholine biosynthetic process"/>
    <property type="evidence" value="ECO:0000314"/>
    <property type="project" value="WormBase"/>
</dbReference>
<dbReference type="CDD" id="cd02174">
    <property type="entry name" value="CCT"/>
    <property type="match status" value="1"/>
</dbReference>
<dbReference type="FunFam" id="3.40.50.620:FF:000016">
    <property type="entry name" value="Putative choline-phosphate cytidylyltransferase B"/>
    <property type="match status" value="1"/>
</dbReference>
<dbReference type="Gene3D" id="3.40.50.620">
    <property type="entry name" value="HUPs"/>
    <property type="match status" value="1"/>
</dbReference>
<dbReference type="InterPro" id="IPR041723">
    <property type="entry name" value="CCT"/>
</dbReference>
<dbReference type="InterPro" id="IPR004821">
    <property type="entry name" value="Cyt_trans-like"/>
</dbReference>
<dbReference type="InterPro" id="IPR045049">
    <property type="entry name" value="Pcy1-like"/>
</dbReference>
<dbReference type="InterPro" id="IPR014729">
    <property type="entry name" value="Rossmann-like_a/b/a_fold"/>
</dbReference>
<dbReference type="NCBIfam" id="TIGR00125">
    <property type="entry name" value="cyt_tran_rel"/>
    <property type="match status" value="1"/>
</dbReference>
<dbReference type="PANTHER" id="PTHR10739:SF13">
    <property type="entry name" value="CHOLINE-PHOSPHATE CYTIDYLYLTRANSFERASE"/>
    <property type="match status" value="1"/>
</dbReference>
<dbReference type="PANTHER" id="PTHR10739">
    <property type="entry name" value="CYTIDYLYLTRANSFERASE"/>
    <property type="match status" value="1"/>
</dbReference>
<dbReference type="Pfam" id="PF01467">
    <property type="entry name" value="CTP_transf_like"/>
    <property type="match status" value="1"/>
</dbReference>
<dbReference type="SUPFAM" id="SSF52374">
    <property type="entry name" value="Nucleotidylyl transferase"/>
    <property type="match status" value="1"/>
</dbReference>
<feature type="chain" id="PRO_0000208458" description="Putative choline-phosphate cytidylyltransferase">
    <location>
        <begin position="1"/>
        <end position="362"/>
    </location>
</feature>
<feature type="region of interest" description="Disordered" evidence="2">
    <location>
        <begin position="1"/>
        <end position="25"/>
    </location>
</feature>
<feature type="region of interest" description="Disordered" evidence="2">
    <location>
        <begin position="296"/>
        <end position="362"/>
    </location>
</feature>
<feature type="compositionally biased region" description="Basic and acidic residues" evidence="2">
    <location>
        <begin position="1"/>
        <end position="16"/>
    </location>
</feature>
<feature type="compositionally biased region" description="Acidic residues" evidence="2">
    <location>
        <begin position="321"/>
        <end position="331"/>
    </location>
</feature>
<feature type="compositionally biased region" description="Basic and acidic residues" evidence="2">
    <location>
        <begin position="332"/>
        <end position="345"/>
    </location>
</feature>
<feature type="compositionally biased region" description="Basic residues" evidence="2">
    <location>
        <begin position="346"/>
        <end position="356"/>
    </location>
</feature>
<feature type="binding site" evidence="1">
    <location>
        <begin position="88"/>
        <end position="96"/>
    </location>
    <ligand>
        <name>CTP</name>
        <dbReference type="ChEBI" id="CHEBI:37563"/>
    </ligand>
</feature>
<feature type="binding site" evidence="1">
    <location>
        <position position="126"/>
    </location>
    <ligand>
        <name>CTP</name>
        <dbReference type="ChEBI" id="CHEBI:37563"/>
    </ligand>
</feature>
<feature type="binding site" evidence="1">
    <location>
        <position position="126"/>
    </location>
    <ligand>
        <name>substrate</name>
    </ligand>
</feature>
<feature type="binding site" evidence="1">
    <location>
        <position position="155"/>
    </location>
    <ligand>
        <name>substrate</name>
    </ligand>
</feature>
<feature type="binding site" evidence="1">
    <location>
        <begin position="172"/>
        <end position="173"/>
    </location>
    <ligand>
        <name>CTP</name>
        <dbReference type="ChEBI" id="CHEBI:37563"/>
    </ligand>
</feature>
<feature type="binding site" evidence="1">
    <location>
        <position position="177"/>
    </location>
    <ligand>
        <name>CTP</name>
        <dbReference type="ChEBI" id="CHEBI:37563"/>
    </ligand>
</feature>
<feature type="binding site" evidence="1">
    <location>
        <begin position="200"/>
        <end position="204"/>
    </location>
    <ligand>
        <name>CTP</name>
        <dbReference type="ChEBI" id="CHEBI:37563"/>
    </ligand>
</feature>
<accession>P49583</accession>
<name>PCY1_CAEEL</name>
<sequence>MFIHKQEKMPQRKRTMDSPQEEDVEVKKKATEVEYVVRSLASDEPAPFSDEALAITTREAVDYSKKITLAMAEANEAGRPVRIYADGIYDLFHHGHANQLRQVKKMFPNVYLIVGVCGDRDTHKYKGRTVTSEEERYDGVRHCRYVDEVYREAPWFCTVEFLKNLKVDFIAHDAIPYVAPGEEDLYEKFRREGMFLETERTEGVSTSDVVCRIIRDYDKYVRRNLQRGYSPKELNVGFLAASKYQIQNKVDSLKSKGIELLSTWKSKSDDIIRDFIDTFHKDGGLNAFGGRLKGIMSMSRSPSPSPHEGSPTGIEHHLETQDEEEEEEALEEEKVVEQKIVEKKEVVKKRSSRNKAKTPLEY</sequence>
<comment type="catalytic activity">
    <reaction>
        <text>phosphocholine + CTP + H(+) = CDP-choline + diphosphate</text>
        <dbReference type="Rhea" id="RHEA:18997"/>
        <dbReference type="ChEBI" id="CHEBI:15378"/>
        <dbReference type="ChEBI" id="CHEBI:33019"/>
        <dbReference type="ChEBI" id="CHEBI:37563"/>
        <dbReference type="ChEBI" id="CHEBI:58779"/>
        <dbReference type="ChEBI" id="CHEBI:295975"/>
        <dbReference type="EC" id="2.7.7.15"/>
    </reaction>
</comment>
<comment type="pathway">
    <text>Phospholipid metabolism; phosphatidylcholine biosynthesis; phosphatidylcholine from phosphocholine: step 1/2.</text>
</comment>
<comment type="similarity">
    <text evidence="3">Belongs to the cytidylyltransferase family.</text>
</comment>
<evidence type="ECO:0000250" key="1"/>
<evidence type="ECO:0000256" key="2">
    <source>
        <dbReference type="SAM" id="MobiDB-lite"/>
    </source>
</evidence>
<evidence type="ECO:0000305" key="3"/>
<evidence type="ECO:0000312" key="4">
    <source>
        <dbReference type="WormBase" id="F08C6.2a"/>
    </source>
</evidence>
<organism>
    <name type="scientific">Caenorhabditis elegans</name>
    <dbReference type="NCBI Taxonomy" id="6239"/>
    <lineage>
        <taxon>Eukaryota</taxon>
        <taxon>Metazoa</taxon>
        <taxon>Ecdysozoa</taxon>
        <taxon>Nematoda</taxon>
        <taxon>Chromadorea</taxon>
        <taxon>Rhabditida</taxon>
        <taxon>Rhabditina</taxon>
        <taxon>Rhabditomorpha</taxon>
        <taxon>Rhabditoidea</taxon>
        <taxon>Rhabditidae</taxon>
        <taxon>Peloderinae</taxon>
        <taxon>Caenorhabditis</taxon>
    </lineage>
</organism>